<evidence type="ECO:0000250" key="1"/>
<evidence type="ECO:0000250" key="2">
    <source>
        <dbReference type="UniProtKB" id="Q32MQ0"/>
    </source>
</evidence>
<evidence type="ECO:0000256" key="3">
    <source>
        <dbReference type="SAM" id="MobiDB-lite"/>
    </source>
</evidence>
<evidence type="ECO:0000305" key="4"/>
<comment type="function">
    <text evidence="1">Transcription factor involved in epidermis differentiation.</text>
</comment>
<comment type="subcellular location">
    <subcellularLocation>
        <location evidence="1">Nucleus</location>
    </subcellularLocation>
</comment>
<proteinExistence type="evidence at transcript level"/>
<sequence>MSLMKERKPKKPHYIPRPPGKPFKYKCFQCPFTCNEKSHLFNHMKYGLCKNSITVVTDQDRIIKNPKVNSMDQNQTSNEPFAKSSVPAINSSLESKMLHSVAREEAKENLDLKNEPKSHAEKTTVSKEFTLSPPVAISQINKPPSLDGVMRPSAFIPVGEHRVKKGAENRTIPELTSISAEPAKGVHSIKSAFHSLPTPWKSGLVSPDFSQKSSIPRYIRPMISEYPPQFYSEAGLPAVFSPYLFPQTECENPMLSIYSTPDQRPYLPHPLQPSGLPLPKPINAPFEHYRLLQQFQQNPQLHYGFYRPTEHPYFSYGLKVPPAPGLSKEHTSQSMDSPTFIYPSSHPSRLYPLEGFQKLFEIQKETPPVLAKNLDSKSDSESVKMSPRAGSAATGSPERPSPTNFTQSSQGHEGIFDLSTKSISTSDKIGKDFTSGKAMRKSTDSQTIISRENSPSFGNDGVQSHSEGITVTDDAVHDDTIAPLNLSKKSEVESRDIVDTVNNSDFTNERVGFMEMQDLPLNLSVKDSGSNHNTLCADERVLLPRQSTSPPVYQAIQTTDNRAPTTTGIHSLGIIENCDEQKQSAAVALCQLATSSPGVPPRGTEDEFPEKETVVPEQVQPRSPAAQETETDVGARGQKRTNSKELGKSQSSTKKQKAVDSGRMFTLRKRPRVS</sequence>
<name>ZN750_XENLA</name>
<organism>
    <name type="scientific">Xenopus laevis</name>
    <name type="common">African clawed frog</name>
    <dbReference type="NCBI Taxonomy" id="8355"/>
    <lineage>
        <taxon>Eukaryota</taxon>
        <taxon>Metazoa</taxon>
        <taxon>Chordata</taxon>
        <taxon>Craniata</taxon>
        <taxon>Vertebrata</taxon>
        <taxon>Euteleostomi</taxon>
        <taxon>Amphibia</taxon>
        <taxon>Batrachia</taxon>
        <taxon>Anura</taxon>
        <taxon>Pipoidea</taxon>
        <taxon>Pipidae</taxon>
        <taxon>Xenopodinae</taxon>
        <taxon>Xenopus</taxon>
        <taxon>Xenopus</taxon>
    </lineage>
</organism>
<dbReference type="EMBL" id="BC043737">
    <property type="protein sequence ID" value="AAH43737.1"/>
    <property type="molecule type" value="mRNA"/>
</dbReference>
<dbReference type="EMBL" id="BC108879">
    <property type="protein sequence ID" value="AAI08880.1"/>
    <property type="molecule type" value="mRNA"/>
</dbReference>
<dbReference type="RefSeq" id="NP_001079466.1">
    <property type="nucleotide sequence ID" value="NM_001085997.1"/>
</dbReference>
<dbReference type="SMR" id="Q32N19"/>
<dbReference type="DNASU" id="379153"/>
<dbReference type="GeneID" id="379153"/>
<dbReference type="KEGG" id="xla:379153"/>
<dbReference type="AGR" id="Xenbase:XB-GENE-5775750"/>
<dbReference type="CTD" id="379153"/>
<dbReference type="Xenbase" id="XB-GENE-5775750">
    <property type="gene designation" value="znf750.L"/>
</dbReference>
<dbReference type="OMA" id="TERINDK"/>
<dbReference type="OrthoDB" id="8933073at2759"/>
<dbReference type="Proteomes" id="UP000186698">
    <property type="component" value="Chromosome 9_10L"/>
</dbReference>
<dbReference type="Bgee" id="379153">
    <property type="expression patterns" value="Expressed in zone of skin and 9 other cell types or tissues"/>
</dbReference>
<dbReference type="GO" id="GO:0005634">
    <property type="term" value="C:nucleus"/>
    <property type="evidence" value="ECO:0000250"/>
    <property type="project" value="UniProtKB"/>
</dbReference>
<dbReference type="GO" id="GO:0001228">
    <property type="term" value="F:DNA-binding transcription activator activity, RNA polymerase II-specific"/>
    <property type="evidence" value="ECO:0000250"/>
    <property type="project" value="UniProtKB"/>
</dbReference>
<dbReference type="GO" id="GO:1990841">
    <property type="term" value="F:promoter-specific chromatin binding"/>
    <property type="evidence" value="ECO:0000250"/>
    <property type="project" value="UniProtKB"/>
</dbReference>
<dbReference type="GO" id="GO:0000978">
    <property type="term" value="F:RNA polymerase II cis-regulatory region sequence-specific DNA binding"/>
    <property type="evidence" value="ECO:0000250"/>
    <property type="project" value="UniProtKB"/>
</dbReference>
<dbReference type="GO" id="GO:0008270">
    <property type="term" value="F:zinc ion binding"/>
    <property type="evidence" value="ECO:0007669"/>
    <property type="project" value="UniProtKB-KW"/>
</dbReference>
<dbReference type="GO" id="GO:0030154">
    <property type="term" value="P:cell differentiation"/>
    <property type="evidence" value="ECO:0007669"/>
    <property type="project" value="UniProtKB-KW"/>
</dbReference>
<dbReference type="GO" id="GO:0008544">
    <property type="term" value="P:epidermis development"/>
    <property type="evidence" value="ECO:0000250"/>
    <property type="project" value="UniProtKB"/>
</dbReference>
<dbReference type="GO" id="GO:0045944">
    <property type="term" value="P:positive regulation of transcription by RNA polymerase II"/>
    <property type="evidence" value="ECO:0000250"/>
    <property type="project" value="UniProtKB"/>
</dbReference>
<dbReference type="InterPro" id="IPR039363">
    <property type="entry name" value="ZNF750"/>
</dbReference>
<dbReference type="InterPro" id="IPR039064">
    <property type="entry name" value="ZNF750_Znf"/>
</dbReference>
<dbReference type="PANTHER" id="PTHR14678">
    <property type="entry name" value="PROLINE-RICH PROTEIN 35-RELATED"/>
    <property type="match status" value="1"/>
</dbReference>
<dbReference type="PANTHER" id="PTHR14678:SF1">
    <property type="entry name" value="ZINC FINGER PROTEIN 750"/>
    <property type="match status" value="1"/>
</dbReference>
<dbReference type="Pfam" id="PF15269">
    <property type="entry name" value="zf-C2H2_7"/>
    <property type="match status" value="1"/>
</dbReference>
<keyword id="KW-0010">Activator</keyword>
<keyword id="KW-0221">Differentiation</keyword>
<keyword id="KW-0479">Metal-binding</keyword>
<keyword id="KW-0539">Nucleus</keyword>
<keyword id="KW-1185">Reference proteome</keyword>
<keyword id="KW-0804">Transcription</keyword>
<keyword id="KW-0805">Transcription regulation</keyword>
<keyword id="KW-0862">Zinc</keyword>
<keyword id="KW-0863">Zinc-finger</keyword>
<protein>
    <recommendedName>
        <fullName>Zinc finger protein 750</fullName>
    </recommendedName>
</protein>
<feature type="chain" id="PRO_0000247073" description="Zinc finger protein 750">
    <location>
        <begin position="1"/>
        <end position="674"/>
    </location>
</feature>
<feature type="zinc finger region" description="CCHC-type" evidence="2">
    <location>
        <begin position="25"/>
        <end position="51"/>
    </location>
</feature>
<feature type="region of interest" description="Disordered" evidence="3">
    <location>
        <begin position="105"/>
        <end position="125"/>
    </location>
</feature>
<feature type="region of interest" description="Disordered" evidence="3">
    <location>
        <begin position="370"/>
        <end position="466"/>
    </location>
</feature>
<feature type="region of interest" description="Disordered" evidence="3">
    <location>
        <begin position="594"/>
        <end position="674"/>
    </location>
</feature>
<feature type="compositionally biased region" description="Polar residues" evidence="3">
    <location>
        <begin position="401"/>
        <end position="411"/>
    </location>
</feature>
<feature type="compositionally biased region" description="Polar residues" evidence="3">
    <location>
        <begin position="444"/>
        <end position="466"/>
    </location>
</feature>
<feature type="binding site" evidence="2">
    <location>
        <position position="27"/>
    </location>
    <ligand>
        <name>Zn(2+)</name>
        <dbReference type="ChEBI" id="CHEBI:29105"/>
    </ligand>
</feature>
<feature type="binding site" evidence="2">
    <location>
        <position position="30"/>
    </location>
    <ligand>
        <name>Zn(2+)</name>
        <dbReference type="ChEBI" id="CHEBI:29105"/>
    </ligand>
</feature>
<feature type="binding site" evidence="2">
    <location>
        <position position="43"/>
    </location>
    <ligand>
        <name>Zn(2+)</name>
        <dbReference type="ChEBI" id="CHEBI:29105"/>
    </ligand>
</feature>
<feature type="binding site" evidence="2">
    <location>
        <position position="49"/>
    </location>
    <ligand>
        <name>Zn(2+)</name>
        <dbReference type="ChEBI" id="CHEBI:29105"/>
    </ligand>
</feature>
<feature type="sequence conflict" description="In Ref. 1; AAH43737." evidence="4" ref="1">
    <original>N</original>
    <variation>K</variation>
    <location>
        <position position="74"/>
    </location>
</feature>
<gene>
    <name type="primary">znf750</name>
</gene>
<accession>Q32N19</accession>
<accession>Q7ZYL3</accession>
<reference key="1">
    <citation type="submission" date="2005-11" db="EMBL/GenBank/DDBJ databases">
        <authorList>
            <consortium name="NIH - Xenopus Gene Collection (XGC) project"/>
        </authorList>
    </citation>
    <scope>NUCLEOTIDE SEQUENCE [LARGE SCALE MRNA]</scope>
    <source>
        <tissue>Embryo</tissue>
    </source>
</reference>